<protein>
    <recommendedName>
        <fullName evidence="1">GTPase Der</fullName>
    </recommendedName>
    <alternativeName>
        <fullName evidence="1">GTP-binding protein EngA</fullName>
    </alternativeName>
</protein>
<keyword id="KW-0342">GTP-binding</keyword>
<keyword id="KW-0547">Nucleotide-binding</keyword>
<keyword id="KW-1185">Reference proteome</keyword>
<keyword id="KW-0677">Repeat</keyword>
<keyword id="KW-0690">Ribosome biogenesis</keyword>
<evidence type="ECO:0000255" key="1">
    <source>
        <dbReference type="HAMAP-Rule" id="MF_00195"/>
    </source>
</evidence>
<accession>B1X0B0</accession>
<organism>
    <name type="scientific">Crocosphaera subtropica (strain ATCC 51142 / BH68)</name>
    <name type="common">Cyanothece sp. (strain ATCC 51142)</name>
    <dbReference type="NCBI Taxonomy" id="43989"/>
    <lineage>
        <taxon>Bacteria</taxon>
        <taxon>Bacillati</taxon>
        <taxon>Cyanobacteriota</taxon>
        <taxon>Cyanophyceae</taxon>
        <taxon>Oscillatoriophycideae</taxon>
        <taxon>Chroococcales</taxon>
        <taxon>Aphanothecaceae</taxon>
        <taxon>Crocosphaera</taxon>
        <taxon>Crocosphaera subtropica</taxon>
    </lineage>
</organism>
<name>DER_CROS5</name>
<feature type="chain" id="PRO_1000099114" description="GTPase Der">
    <location>
        <begin position="1"/>
        <end position="452"/>
    </location>
</feature>
<feature type="domain" description="EngA-type G 1">
    <location>
        <begin position="4"/>
        <end position="169"/>
    </location>
</feature>
<feature type="domain" description="EngA-type G 2">
    <location>
        <begin position="177"/>
        <end position="352"/>
    </location>
</feature>
<feature type="domain" description="KH-like" evidence="1">
    <location>
        <begin position="353"/>
        <end position="438"/>
    </location>
</feature>
<feature type="binding site" evidence="1">
    <location>
        <begin position="10"/>
        <end position="17"/>
    </location>
    <ligand>
        <name>GTP</name>
        <dbReference type="ChEBI" id="CHEBI:37565"/>
        <label>1</label>
    </ligand>
</feature>
<feature type="binding site" evidence="1">
    <location>
        <begin position="57"/>
        <end position="61"/>
    </location>
    <ligand>
        <name>GTP</name>
        <dbReference type="ChEBI" id="CHEBI:37565"/>
        <label>1</label>
    </ligand>
</feature>
<feature type="binding site" evidence="1">
    <location>
        <begin position="120"/>
        <end position="123"/>
    </location>
    <ligand>
        <name>GTP</name>
        <dbReference type="ChEBI" id="CHEBI:37565"/>
        <label>1</label>
    </ligand>
</feature>
<feature type="binding site" evidence="1">
    <location>
        <begin position="183"/>
        <end position="190"/>
    </location>
    <ligand>
        <name>GTP</name>
        <dbReference type="ChEBI" id="CHEBI:37565"/>
        <label>2</label>
    </ligand>
</feature>
<feature type="binding site" evidence="1">
    <location>
        <begin position="230"/>
        <end position="234"/>
    </location>
    <ligand>
        <name>GTP</name>
        <dbReference type="ChEBI" id="CHEBI:37565"/>
        <label>2</label>
    </ligand>
</feature>
<feature type="binding site" evidence="1">
    <location>
        <begin position="295"/>
        <end position="298"/>
    </location>
    <ligand>
        <name>GTP</name>
        <dbReference type="ChEBI" id="CHEBI:37565"/>
        <label>2</label>
    </ligand>
</feature>
<reference key="1">
    <citation type="journal article" date="2008" name="Proc. Natl. Acad. Sci. U.S.A.">
        <title>The genome of Cyanothece 51142, a unicellular diazotrophic cyanobacterium important in the marine nitrogen cycle.</title>
        <authorList>
            <person name="Welsh E.A."/>
            <person name="Liberton M."/>
            <person name="Stoeckel J."/>
            <person name="Loh T."/>
            <person name="Elvitigala T."/>
            <person name="Wang C."/>
            <person name="Wollam A."/>
            <person name="Fulton R.S."/>
            <person name="Clifton S.W."/>
            <person name="Jacobs J.M."/>
            <person name="Aurora R."/>
            <person name="Ghosh B.K."/>
            <person name="Sherman L.A."/>
            <person name="Smith R.D."/>
            <person name="Wilson R.K."/>
            <person name="Pakrasi H.B."/>
        </authorList>
    </citation>
    <scope>NUCLEOTIDE SEQUENCE [LARGE SCALE GENOMIC DNA]</scope>
    <source>
        <strain>ATCC 51142 / BH68</strain>
    </source>
</reference>
<proteinExistence type="inferred from homology"/>
<comment type="function">
    <text evidence="1">GTPase that plays an essential role in the late steps of ribosome biogenesis.</text>
</comment>
<comment type="subunit">
    <text evidence="1">Associates with the 50S ribosomal subunit.</text>
</comment>
<comment type="similarity">
    <text evidence="1">Belongs to the TRAFAC class TrmE-Era-EngA-EngB-Septin-like GTPase superfamily. EngA (Der) GTPase family.</text>
</comment>
<dbReference type="EMBL" id="CP000806">
    <property type="protein sequence ID" value="ACB49611.1"/>
    <property type="molecule type" value="Genomic_DNA"/>
</dbReference>
<dbReference type="RefSeq" id="WP_009546754.1">
    <property type="nucleotide sequence ID" value="NC_010546.1"/>
</dbReference>
<dbReference type="SMR" id="B1X0B0"/>
<dbReference type="STRING" id="43989.cce_0260"/>
<dbReference type="KEGG" id="cyt:cce_0260"/>
<dbReference type="eggNOG" id="COG1160">
    <property type="taxonomic scope" value="Bacteria"/>
</dbReference>
<dbReference type="HOGENOM" id="CLU_016077_6_2_3"/>
<dbReference type="OrthoDB" id="9805918at2"/>
<dbReference type="Proteomes" id="UP000001203">
    <property type="component" value="Chromosome circular"/>
</dbReference>
<dbReference type="GO" id="GO:0005525">
    <property type="term" value="F:GTP binding"/>
    <property type="evidence" value="ECO:0007669"/>
    <property type="project" value="UniProtKB-UniRule"/>
</dbReference>
<dbReference type="GO" id="GO:0043022">
    <property type="term" value="F:ribosome binding"/>
    <property type="evidence" value="ECO:0007669"/>
    <property type="project" value="TreeGrafter"/>
</dbReference>
<dbReference type="GO" id="GO:0042254">
    <property type="term" value="P:ribosome biogenesis"/>
    <property type="evidence" value="ECO:0007669"/>
    <property type="project" value="UniProtKB-KW"/>
</dbReference>
<dbReference type="CDD" id="cd01894">
    <property type="entry name" value="EngA1"/>
    <property type="match status" value="1"/>
</dbReference>
<dbReference type="CDD" id="cd01895">
    <property type="entry name" value="EngA2"/>
    <property type="match status" value="1"/>
</dbReference>
<dbReference type="FunFam" id="3.30.300.20:FF:000004">
    <property type="entry name" value="GTPase Der"/>
    <property type="match status" value="1"/>
</dbReference>
<dbReference type="FunFam" id="3.40.50.300:FF:000040">
    <property type="entry name" value="GTPase Der"/>
    <property type="match status" value="1"/>
</dbReference>
<dbReference type="FunFam" id="3.40.50.300:FF:001185">
    <property type="entry name" value="GTPase Der"/>
    <property type="match status" value="1"/>
</dbReference>
<dbReference type="Gene3D" id="3.30.300.20">
    <property type="match status" value="1"/>
</dbReference>
<dbReference type="Gene3D" id="3.40.50.300">
    <property type="entry name" value="P-loop containing nucleotide triphosphate hydrolases"/>
    <property type="match status" value="2"/>
</dbReference>
<dbReference type="HAMAP" id="MF_00195">
    <property type="entry name" value="GTPase_Der"/>
    <property type="match status" value="1"/>
</dbReference>
<dbReference type="InterPro" id="IPR031166">
    <property type="entry name" value="G_ENGA"/>
</dbReference>
<dbReference type="InterPro" id="IPR006073">
    <property type="entry name" value="GTP-bd"/>
</dbReference>
<dbReference type="InterPro" id="IPR016484">
    <property type="entry name" value="GTPase_Der"/>
</dbReference>
<dbReference type="InterPro" id="IPR032859">
    <property type="entry name" value="KH_dom-like"/>
</dbReference>
<dbReference type="InterPro" id="IPR015946">
    <property type="entry name" value="KH_dom-like_a/b"/>
</dbReference>
<dbReference type="InterPro" id="IPR027417">
    <property type="entry name" value="P-loop_NTPase"/>
</dbReference>
<dbReference type="InterPro" id="IPR005225">
    <property type="entry name" value="Small_GTP-bd"/>
</dbReference>
<dbReference type="NCBIfam" id="TIGR03594">
    <property type="entry name" value="GTPase_EngA"/>
    <property type="match status" value="1"/>
</dbReference>
<dbReference type="NCBIfam" id="TIGR00231">
    <property type="entry name" value="small_GTP"/>
    <property type="match status" value="2"/>
</dbReference>
<dbReference type="PANTHER" id="PTHR43834">
    <property type="entry name" value="GTPASE DER"/>
    <property type="match status" value="1"/>
</dbReference>
<dbReference type="PANTHER" id="PTHR43834:SF6">
    <property type="entry name" value="GTPASE DER"/>
    <property type="match status" value="1"/>
</dbReference>
<dbReference type="Pfam" id="PF14714">
    <property type="entry name" value="KH_dom-like"/>
    <property type="match status" value="1"/>
</dbReference>
<dbReference type="Pfam" id="PF01926">
    <property type="entry name" value="MMR_HSR1"/>
    <property type="match status" value="2"/>
</dbReference>
<dbReference type="PIRSF" id="PIRSF006485">
    <property type="entry name" value="GTP-binding_EngA"/>
    <property type="match status" value="1"/>
</dbReference>
<dbReference type="PRINTS" id="PR00326">
    <property type="entry name" value="GTP1OBG"/>
</dbReference>
<dbReference type="SUPFAM" id="SSF52540">
    <property type="entry name" value="P-loop containing nucleoside triphosphate hydrolases"/>
    <property type="match status" value="2"/>
</dbReference>
<dbReference type="PROSITE" id="PS51712">
    <property type="entry name" value="G_ENGA"/>
    <property type="match status" value="2"/>
</dbReference>
<gene>
    <name evidence="1" type="primary">der</name>
    <name type="synonym">engA</name>
    <name type="ordered locus">cce_0260</name>
</gene>
<sequence>MALPIVAIIGRPNVGKSTLVNRLAKDRQAIVHDQPGITRDRTYRPAFWCDRDFQVVDTGGLVFDDDTEFLPLIREQAMAALTEASAAIFVVDGQLGPTAGDREISDWLRRQKVPVLLAVNKCESPEMGLIQAAEFWELGLGEPYPISGIHGSGTGELLDQLITYLPSPDELPDREEINVSIIGRPNVGKSSLLNAFLGEQRAIVSPISGTTRDAIDTVVERGDNTYRLIDTAGIRRKKNVNYGAEFFSINRAFKAIRRADVVLLVIDAIDGVTDQDIKLADRIIDEGRAAIIVVNKWDAVEKDSYTIYDYKQKVMDRLYFMEWADIIFVSAMSGKRVENIFELVDVAVEEHRRRVNTSVVNEVLEEAVKWHSPPTTKQGKQGRIYYGTQVSSQPPTIALFVNDPKRFNDNYRRYIERQFREQIGFPGTPIRLLWRGKKTRDVEPSLNRATKV</sequence>